<evidence type="ECO:0000255" key="1">
    <source>
        <dbReference type="HAMAP-Rule" id="MF_00052"/>
    </source>
</evidence>
<evidence type="ECO:0000255" key="2">
    <source>
        <dbReference type="PROSITE-ProRule" id="PRU01319"/>
    </source>
</evidence>
<organism>
    <name type="scientific">Cupriavidus necator (strain ATCC 17699 / DSM 428 / KCTC 22496 / NCIMB 10442 / H16 / Stanier 337)</name>
    <name type="common">Ralstonia eutropha</name>
    <dbReference type="NCBI Taxonomy" id="381666"/>
    <lineage>
        <taxon>Bacteria</taxon>
        <taxon>Pseudomonadati</taxon>
        <taxon>Pseudomonadota</taxon>
        <taxon>Betaproteobacteria</taxon>
        <taxon>Burkholderiales</taxon>
        <taxon>Burkholderiaceae</taxon>
        <taxon>Cupriavidus</taxon>
    </lineage>
</organism>
<comment type="function">
    <text evidence="1">Endonuclease that specifically degrades the RNA of RNA-DNA hybrids.</text>
</comment>
<comment type="catalytic activity">
    <reaction evidence="1">
        <text>Endonucleolytic cleavage to 5'-phosphomonoester.</text>
        <dbReference type="EC" id="3.1.26.4"/>
    </reaction>
</comment>
<comment type="cofactor">
    <cofactor evidence="1">
        <name>Mn(2+)</name>
        <dbReference type="ChEBI" id="CHEBI:29035"/>
    </cofactor>
    <cofactor evidence="1">
        <name>Mg(2+)</name>
        <dbReference type="ChEBI" id="CHEBI:18420"/>
    </cofactor>
    <text evidence="1">Manganese or magnesium. Binds 1 divalent metal ion per monomer in the absence of substrate. May bind a second metal ion after substrate binding.</text>
</comment>
<comment type="subcellular location">
    <subcellularLocation>
        <location evidence="1">Cytoplasm</location>
    </subcellularLocation>
</comment>
<comment type="similarity">
    <text evidence="1">Belongs to the RNase HII family.</text>
</comment>
<sequence>MARRNAASPQMGLDLAPAAAAVQRLCGVDEAGRGPLAGPVYAAAVILDPKRPIRGLADSKILTAAKREQLYEKICERALGWHIAFATVEEIDTLNILHASMLAMQRAVQGLAASGIVPDLVQVDGNRCPRVPFPVEAIVQGDALVKAISAASILAKVARDRELRVLHERYPQYGFDSHVGYGTPQHLAALAEFGATPHHRRSFAPVREALARLPMFTAMPATAEVIEPVATVSVTAAQ</sequence>
<dbReference type="EC" id="3.1.26.4" evidence="1"/>
<dbReference type="EMBL" id="AM260479">
    <property type="protein sequence ID" value="CAJ93141.1"/>
    <property type="molecule type" value="Genomic_DNA"/>
</dbReference>
<dbReference type="SMR" id="Q0KA30"/>
<dbReference type="STRING" id="381666.H16_A2041"/>
<dbReference type="KEGG" id="reh:H16_A2041"/>
<dbReference type="PATRIC" id="fig|381666.6.peg.2449"/>
<dbReference type="eggNOG" id="COG0164">
    <property type="taxonomic scope" value="Bacteria"/>
</dbReference>
<dbReference type="HOGENOM" id="CLU_036532_3_2_4"/>
<dbReference type="OrthoDB" id="9803420at2"/>
<dbReference type="Proteomes" id="UP000008210">
    <property type="component" value="Chromosome 1"/>
</dbReference>
<dbReference type="GO" id="GO:0005737">
    <property type="term" value="C:cytoplasm"/>
    <property type="evidence" value="ECO:0007669"/>
    <property type="project" value="UniProtKB-SubCell"/>
</dbReference>
<dbReference type="GO" id="GO:0032299">
    <property type="term" value="C:ribonuclease H2 complex"/>
    <property type="evidence" value="ECO:0007669"/>
    <property type="project" value="TreeGrafter"/>
</dbReference>
<dbReference type="GO" id="GO:0030145">
    <property type="term" value="F:manganese ion binding"/>
    <property type="evidence" value="ECO:0007669"/>
    <property type="project" value="UniProtKB-UniRule"/>
</dbReference>
<dbReference type="GO" id="GO:0003723">
    <property type="term" value="F:RNA binding"/>
    <property type="evidence" value="ECO:0007669"/>
    <property type="project" value="InterPro"/>
</dbReference>
<dbReference type="GO" id="GO:0004523">
    <property type="term" value="F:RNA-DNA hybrid ribonuclease activity"/>
    <property type="evidence" value="ECO:0007669"/>
    <property type="project" value="UniProtKB-UniRule"/>
</dbReference>
<dbReference type="GO" id="GO:0043137">
    <property type="term" value="P:DNA replication, removal of RNA primer"/>
    <property type="evidence" value="ECO:0007669"/>
    <property type="project" value="TreeGrafter"/>
</dbReference>
<dbReference type="GO" id="GO:0006298">
    <property type="term" value="P:mismatch repair"/>
    <property type="evidence" value="ECO:0007669"/>
    <property type="project" value="TreeGrafter"/>
</dbReference>
<dbReference type="CDD" id="cd07182">
    <property type="entry name" value="RNase_HII_bacteria_HII_like"/>
    <property type="match status" value="1"/>
</dbReference>
<dbReference type="FunFam" id="3.30.420.10:FF:000006">
    <property type="entry name" value="Ribonuclease HII"/>
    <property type="match status" value="1"/>
</dbReference>
<dbReference type="Gene3D" id="3.30.420.10">
    <property type="entry name" value="Ribonuclease H-like superfamily/Ribonuclease H"/>
    <property type="match status" value="1"/>
</dbReference>
<dbReference type="HAMAP" id="MF_00052_B">
    <property type="entry name" value="RNase_HII_B"/>
    <property type="match status" value="1"/>
</dbReference>
<dbReference type="InterPro" id="IPR022898">
    <property type="entry name" value="RNase_HII"/>
</dbReference>
<dbReference type="InterPro" id="IPR001352">
    <property type="entry name" value="RNase_HII/HIII"/>
</dbReference>
<dbReference type="InterPro" id="IPR024567">
    <property type="entry name" value="RNase_HII/HIII_dom"/>
</dbReference>
<dbReference type="InterPro" id="IPR012337">
    <property type="entry name" value="RNaseH-like_sf"/>
</dbReference>
<dbReference type="InterPro" id="IPR036397">
    <property type="entry name" value="RNaseH_sf"/>
</dbReference>
<dbReference type="NCBIfam" id="NF000595">
    <property type="entry name" value="PRK00015.1-3"/>
    <property type="match status" value="1"/>
</dbReference>
<dbReference type="NCBIfam" id="NF000596">
    <property type="entry name" value="PRK00015.1-4"/>
    <property type="match status" value="1"/>
</dbReference>
<dbReference type="PANTHER" id="PTHR10954">
    <property type="entry name" value="RIBONUCLEASE H2 SUBUNIT A"/>
    <property type="match status" value="1"/>
</dbReference>
<dbReference type="PANTHER" id="PTHR10954:SF18">
    <property type="entry name" value="RIBONUCLEASE HII"/>
    <property type="match status" value="1"/>
</dbReference>
<dbReference type="Pfam" id="PF01351">
    <property type="entry name" value="RNase_HII"/>
    <property type="match status" value="1"/>
</dbReference>
<dbReference type="SUPFAM" id="SSF53098">
    <property type="entry name" value="Ribonuclease H-like"/>
    <property type="match status" value="1"/>
</dbReference>
<dbReference type="PROSITE" id="PS51975">
    <property type="entry name" value="RNASE_H_2"/>
    <property type="match status" value="1"/>
</dbReference>
<accession>Q0KA30</accession>
<gene>
    <name evidence="1" type="primary">rnhB</name>
    <name type="ordered locus">H16_A2041</name>
</gene>
<proteinExistence type="inferred from homology"/>
<name>RNH2_CUPNH</name>
<feature type="chain" id="PRO_1000031186" description="Ribonuclease HII">
    <location>
        <begin position="1"/>
        <end position="238"/>
    </location>
</feature>
<feature type="domain" description="RNase H type-2" evidence="2">
    <location>
        <begin position="23"/>
        <end position="215"/>
    </location>
</feature>
<feature type="binding site" evidence="1">
    <location>
        <position position="29"/>
    </location>
    <ligand>
        <name>a divalent metal cation</name>
        <dbReference type="ChEBI" id="CHEBI:60240"/>
    </ligand>
</feature>
<feature type="binding site" evidence="1">
    <location>
        <position position="30"/>
    </location>
    <ligand>
        <name>a divalent metal cation</name>
        <dbReference type="ChEBI" id="CHEBI:60240"/>
    </ligand>
</feature>
<feature type="binding site" evidence="1">
    <location>
        <position position="124"/>
    </location>
    <ligand>
        <name>a divalent metal cation</name>
        <dbReference type="ChEBI" id="CHEBI:60240"/>
    </ligand>
</feature>
<keyword id="KW-0963">Cytoplasm</keyword>
<keyword id="KW-0255">Endonuclease</keyword>
<keyword id="KW-0378">Hydrolase</keyword>
<keyword id="KW-0464">Manganese</keyword>
<keyword id="KW-0479">Metal-binding</keyword>
<keyword id="KW-0540">Nuclease</keyword>
<keyword id="KW-1185">Reference proteome</keyword>
<reference key="1">
    <citation type="journal article" date="2006" name="Nat. Biotechnol.">
        <title>Genome sequence of the bioplastic-producing 'Knallgas' bacterium Ralstonia eutropha H16.</title>
        <authorList>
            <person name="Pohlmann A."/>
            <person name="Fricke W.F."/>
            <person name="Reinecke F."/>
            <person name="Kusian B."/>
            <person name="Liesegang H."/>
            <person name="Cramm R."/>
            <person name="Eitinger T."/>
            <person name="Ewering C."/>
            <person name="Poetter M."/>
            <person name="Schwartz E."/>
            <person name="Strittmatter A."/>
            <person name="Voss I."/>
            <person name="Gottschalk G."/>
            <person name="Steinbuechel A."/>
            <person name="Friedrich B."/>
            <person name="Bowien B."/>
        </authorList>
    </citation>
    <scope>NUCLEOTIDE SEQUENCE [LARGE SCALE GENOMIC DNA]</scope>
    <source>
        <strain>ATCC 17699 / DSM 428 / KCTC 22496 / NCIMB 10442 / H16 / Stanier 337</strain>
    </source>
</reference>
<protein>
    <recommendedName>
        <fullName evidence="1">Ribonuclease HII</fullName>
        <shortName evidence="1">RNase HII</shortName>
        <ecNumber evidence="1">3.1.26.4</ecNumber>
    </recommendedName>
</protein>